<gene>
    <name type="primary">mtxX</name>
    <name type="ordered locus">Mbar_A2074</name>
</gene>
<proteinExistence type="inferred from homology"/>
<protein>
    <recommendedName>
        <fullName>Putative methyltransferase mtx subunit X</fullName>
        <ecNumber>2.1.1.-</ecNumber>
    </recommendedName>
</protein>
<sequence>MRARANRARVAMGIRDPNSKMLESAWKAQELGYAQVVLVGIKKEIDKVGTELEVVDTDEPEKTLAELMISRKVDAAIRGTAKASGALAQLKEALGKKRICRLALLLTVDGTPFFLAPVGIDEGNTISDKLRMIKLGAEHIRRFGIEPRVGVLSGGRIGDIGRNKRVDRTLADGEFVTRRAVELGINAKHYTILIEDAIKESNFIVAPDGISGNLIFRTIAFLGGGDGLGASVLMDDYVFVDTSRVGGHFTKAIMLASALSHLNKERQKVIY</sequence>
<name>MTXX_METBF</name>
<dbReference type="EC" id="2.1.1.-"/>
<dbReference type="EMBL" id="Y14612">
    <property type="protein sequence ID" value="CAA74962.1"/>
    <property type="molecule type" value="Genomic_DNA"/>
</dbReference>
<dbReference type="EMBL" id="CP000099">
    <property type="protein sequence ID" value="AAZ71005.1"/>
    <property type="status" value="ALT_INIT"/>
    <property type="molecule type" value="Genomic_DNA"/>
</dbReference>
<dbReference type="SMR" id="O32853"/>
<dbReference type="STRING" id="269797.Mbar_A2074"/>
<dbReference type="PaxDb" id="269797-Mbar_A2074"/>
<dbReference type="KEGG" id="mba:Mbar_A2074"/>
<dbReference type="eggNOG" id="arCOG00854">
    <property type="taxonomic scope" value="Archaea"/>
</dbReference>
<dbReference type="HOGENOM" id="CLU_086562_0_0_2"/>
<dbReference type="GO" id="GO:0008168">
    <property type="term" value="F:methyltransferase activity"/>
    <property type="evidence" value="ECO:0007669"/>
    <property type="project" value="UniProtKB-KW"/>
</dbReference>
<dbReference type="GO" id="GO:0032259">
    <property type="term" value="P:methylation"/>
    <property type="evidence" value="ECO:0007669"/>
    <property type="project" value="UniProtKB-KW"/>
</dbReference>
<dbReference type="Gene3D" id="3.40.718.10">
    <property type="entry name" value="Isopropylmalate Dehydrogenase"/>
    <property type="match status" value="1"/>
</dbReference>
<dbReference type="InterPro" id="IPR016764">
    <property type="entry name" value="MeTrfase_MtxX_xsu"/>
</dbReference>
<dbReference type="NCBIfam" id="TIGR03270">
    <property type="entry name" value="methan_mark_4"/>
    <property type="match status" value="1"/>
</dbReference>
<dbReference type="PIRSF" id="PIRSF019709">
    <property type="entry name" value="Methyltransf_MtxX"/>
    <property type="match status" value="1"/>
</dbReference>
<dbReference type="SUPFAM" id="SSF53659">
    <property type="entry name" value="Isocitrate/Isopropylmalate dehydrogenase-like"/>
    <property type="match status" value="1"/>
</dbReference>
<comment type="subunit">
    <text>May be part of a complex composed of 3 subunits; MtxA, MtxH and MtxX.</text>
</comment>
<comment type="similarity">
    <text evidence="1">Belongs to the MtxX family.</text>
</comment>
<comment type="sequence caution" evidence="1">
    <conflict type="erroneous initiation">
        <sequence resource="EMBL-CDS" id="AAZ71005"/>
    </conflict>
</comment>
<organism>
    <name type="scientific">Methanosarcina barkeri (strain Fusaro / DSM 804)</name>
    <dbReference type="NCBI Taxonomy" id="269797"/>
    <lineage>
        <taxon>Archaea</taxon>
        <taxon>Methanobacteriati</taxon>
        <taxon>Methanobacteriota</taxon>
        <taxon>Stenosarchaea group</taxon>
        <taxon>Methanomicrobia</taxon>
        <taxon>Methanosarcinales</taxon>
        <taxon>Methanosarcinaceae</taxon>
        <taxon>Methanosarcina</taxon>
    </lineage>
</organism>
<keyword id="KW-0489">Methyltransferase</keyword>
<keyword id="KW-0808">Transferase</keyword>
<evidence type="ECO:0000305" key="1"/>
<accession>O32853</accession>
<accession>Q46AT7</accession>
<reference key="1">
    <citation type="journal article" date="1997" name="Eur. J. Biochem.">
        <title>Identification of the active site histidine in the corrinoid protein MtrA of the energy-conserving methyltransferase complex from Methanobacterium thermoautotrophicum.</title>
        <authorList>
            <person name="Harms U."/>
            <person name="Thauer R.K."/>
        </authorList>
    </citation>
    <scope>NUCLEOTIDE SEQUENCE [GENOMIC DNA]</scope>
</reference>
<reference key="2">
    <citation type="journal article" date="2006" name="J. Bacteriol.">
        <title>The Methanosarcina barkeri genome: comparative analysis with Methanosarcina acetivorans and Methanosarcina mazei reveals extensive rearrangement within methanosarcinal genomes.</title>
        <authorList>
            <person name="Maeder D.L."/>
            <person name="Anderson I."/>
            <person name="Brettin T.S."/>
            <person name="Bruce D.C."/>
            <person name="Gilna P."/>
            <person name="Han C.S."/>
            <person name="Lapidus A."/>
            <person name="Metcalf W.W."/>
            <person name="Saunders E."/>
            <person name="Tapia R."/>
            <person name="Sowers K.R."/>
        </authorList>
    </citation>
    <scope>NUCLEOTIDE SEQUENCE [LARGE SCALE GENOMIC DNA]</scope>
    <source>
        <strain>Fusaro / DSM 804</strain>
    </source>
</reference>
<feature type="chain" id="PRO_0000135931" description="Putative methyltransferase mtx subunit X">
    <location>
        <begin position="1"/>
        <end position="271"/>
    </location>
</feature>